<protein>
    <recommendedName>
        <fullName evidence="1">Type III pantothenate kinase</fullName>
        <ecNumber evidence="1">2.7.1.33</ecNumber>
    </recommendedName>
    <alternativeName>
        <fullName evidence="1">PanK-III</fullName>
    </alternativeName>
    <alternativeName>
        <fullName evidence="1">Pantothenic acid kinase</fullName>
    </alternativeName>
</protein>
<accession>Q1D4U7</accession>
<evidence type="ECO:0000255" key="1">
    <source>
        <dbReference type="HAMAP-Rule" id="MF_01274"/>
    </source>
</evidence>
<sequence>MLLAIDVGNTNTVLGVFEGRRLLDHWRVETSTRRTSDEYGILVRQLFTHRGIDPMKVTAVVVSSVVPPLQSNLEKMSERYFRVRPMFIGPGVKTGMPILYDNPREVGADRIVNAVSAYERHHAGVLVVDFGTATTFDAVSPKGEYLGGCICPGINISMEALFQNASKLPRVEFARPPHVIGRNTVHSMQAGLVYGYVGMVDGICARMQAELGFPVKVVATGGLASLVASESKAIHQVDEFLTLEGLRIIYGRNHAS</sequence>
<organism>
    <name type="scientific">Myxococcus xanthus (strain DK1622)</name>
    <dbReference type="NCBI Taxonomy" id="246197"/>
    <lineage>
        <taxon>Bacteria</taxon>
        <taxon>Pseudomonadati</taxon>
        <taxon>Myxococcota</taxon>
        <taxon>Myxococcia</taxon>
        <taxon>Myxococcales</taxon>
        <taxon>Cystobacterineae</taxon>
        <taxon>Myxococcaceae</taxon>
        <taxon>Myxococcus</taxon>
    </lineage>
</organism>
<name>COAX_MYXXD</name>
<feature type="chain" id="PRO_0000267568" description="Type III pantothenate kinase">
    <location>
        <begin position="1"/>
        <end position="256"/>
    </location>
</feature>
<feature type="active site" description="Proton acceptor" evidence="1">
    <location>
        <position position="109"/>
    </location>
</feature>
<feature type="binding site" evidence="1">
    <location>
        <begin position="6"/>
        <end position="13"/>
    </location>
    <ligand>
        <name>ATP</name>
        <dbReference type="ChEBI" id="CHEBI:30616"/>
    </ligand>
</feature>
<feature type="binding site" evidence="1">
    <location>
        <position position="100"/>
    </location>
    <ligand>
        <name>substrate</name>
    </ligand>
</feature>
<feature type="binding site" evidence="1">
    <location>
        <begin position="107"/>
        <end position="110"/>
    </location>
    <ligand>
        <name>substrate</name>
    </ligand>
</feature>
<feature type="binding site" evidence="1">
    <location>
        <position position="129"/>
    </location>
    <ligand>
        <name>K(+)</name>
        <dbReference type="ChEBI" id="CHEBI:29103"/>
    </ligand>
</feature>
<feature type="binding site" evidence="1">
    <location>
        <position position="132"/>
    </location>
    <ligand>
        <name>ATP</name>
        <dbReference type="ChEBI" id="CHEBI:30616"/>
    </ligand>
</feature>
<feature type="binding site" evidence="1">
    <location>
        <position position="184"/>
    </location>
    <ligand>
        <name>substrate</name>
    </ligand>
</feature>
<keyword id="KW-0067">ATP-binding</keyword>
<keyword id="KW-0173">Coenzyme A biosynthesis</keyword>
<keyword id="KW-0963">Cytoplasm</keyword>
<keyword id="KW-0418">Kinase</keyword>
<keyword id="KW-0479">Metal-binding</keyword>
<keyword id="KW-0547">Nucleotide-binding</keyword>
<keyword id="KW-0630">Potassium</keyword>
<keyword id="KW-1185">Reference proteome</keyword>
<keyword id="KW-0808">Transferase</keyword>
<comment type="function">
    <text evidence="1">Catalyzes the phosphorylation of pantothenate (Pan), the first step in CoA biosynthesis.</text>
</comment>
<comment type="catalytic activity">
    <reaction evidence="1">
        <text>(R)-pantothenate + ATP = (R)-4'-phosphopantothenate + ADP + H(+)</text>
        <dbReference type="Rhea" id="RHEA:16373"/>
        <dbReference type="ChEBI" id="CHEBI:10986"/>
        <dbReference type="ChEBI" id="CHEBI:15378"/>
        <dbReference type="ChEBI" id="CHEBI:29032"/>
        <dbReference type="ChEBI" id="CHEBI:30616"/>
        <dbReference type="ChEBI" id="CHEBI:456216"/>
        <dbReference type="EC" id="2.7.1.33"/>
    </reaction>
</comment>
<comment type="cofactor">
    <cofactor evidence="1">
        <name>NH4(+)</name>
        <dbReference type="ChEBI" id="CHEBI:28938"/>
    </cofactor>
    <cofactor evidence="1">
        <name>K(+)</name>
        <dbReference type="ChEBI" id="CHEBI:29103"/>
    </cofactor>
    <text evidence="1">A monovalent cation. Ammonium or potassium.</text>
</comment>
<comment type="pathway">
    <text evidence="1">Cofactor biosynthesis; coenzyme A biosynthesis; CoA from (R)-pantothenate: step 1/5.</text>
</comment>
<comment type="subunit">
    <text evidence="1">Homodimer.</text>
</comment>
<comment type="subcellular location">
    <subcellularLocation>
        <location evidence="1">Cytoplasm</location>
    </subcellularLocation>
</comment>
<comment type="similarity">
    <text evidence="1">Belongs to the type III pantothenate kinase family.</text>
</comment>
<gene>
    <name evidence="1" type="primary">coaX</name>
    <name type="ordered locus">MXAN_4151</name>
</gene>
<dbReference type="EC" id="2.7.1.33" evidence="1"/>
<dbReference type="EMBL" id="CP000113">
    <property type="protein sequence ID" value="ABF92916.1"/>
    <property type="molecule type" value="Genomic_DNA"/>
</dbReference>
<dbReference type="RefSeq" id="WP_011554154.1">
    <property type="nucleotide sequence ID" value="NC_008095.1"/>
</dbReference>
<dbReference type="SMR" id="Q1D4U7"/>
<dbReference type="STRING" id="246197.MXAN_4151"/>
<dbReference type="EnsemblBacteria" id="ABF92916">
    <property type="protein sequence ID" value="ABF92916"/>
    <property type="gene ID" value="MXAN_4151"/>
</dbReference>
<dbReference type="GeneID" id="41361470"/>
<dbReference type="KEGG" id="mxa:MXAN_4151"/>
<dbReference type="eggNOG" id="COG1521">
    <property type="taxonomic scope" value="Bacteria"/>
</dbReference>
<dbReference type="HOGENOM" id="CLU_066627_1_0_7"/>
<dbReference type="OrthoDB" id="9804707at2"/>
<dbReference type="UniPathway" id="UPA00241">
    <property type="reaction ID" value="UER00352"/>
</dbReference>
<dbReference type="Proteomes" id="UP000002402">
    <property type="component" value="Chromosome"/>
</dbReference>
<dbReference type="GO" id="GO:0005737">
    <property type="term" value="C:cytoplasm"/>
    <property type="evidence" value="ECO:0007669"/>
    <property type="project" value="UniProtKB-SubCell"/>
</dbReference>
<dbReference type="GO" id="GO:0005524">
    <property type="term" value="F:ATP binding"/>
    <property type="evidence" value="ECO:0007669"/>
    <property type="project" value="UniProtKB-UniRule"/>
</dbReference>
<dbReference type="GO" id="GO:0046872">
    <property type="term" value="F:metal ion binding"/>
    <property type="evidence" value="ECO:0007669"/>
    <property type="project" value="UniProtKB-KW"/>
</dbReference>
<dbReference type="GO" id="GO:0004594">
    <property type="term" value="F:pantothenate kinase activity"/>
    <property type="evidence" value="ECO:0007669"/>
    <property type="project" value="UniProtKB-UniRule"/>
</dbReference>
<dbReference type="GO" id="GO:0015937">
    <property type="term" value="P:coenzyme A biosynthetic process"/>
    <property type="evidence" value="ECO:0007669"/>
    <property type="project" value="UniProtKB-UniRule"/>
</dbReference>
<dbReference type="CDD" id="cd24015">
    <property type="entry name" value="ASKHA_NBD_PanK-III"/>
    <property type="match status" value="1"/>
</dbReference>
<dbReference type="Gene3D" id="3.30.420.40">
    <property type="match status" value="2"/>
</dbReference>
<dbReference type="HAMAP" id="MF_01274">
    <property type="entry name" value="Pantothen_kinase_3"/>
    <property type="match status" value="1"/>
</dbReference>
<dbReference type="InterPro" id="IPR043129">
    <property type="entry name" value="ATPase_NBD"/>
</dbReference>
<dbReference type="InterPro" id="IPR004619">
    <property type="entry name" value="Type_III_PanK"/>
</dbReference>
<dbReference type="NCBIfam" id="TIGR00671">
    <property type="entry name" value="baf"/>
    <property type="match status" value="1"/>
</dbReference>
<dbReference type="NCBIfam" id="NF009848">
    <property type="entry name" value="PRK13318.1-6"/>
    <property type="match status" value="1"/>
</dbReference>
<dbReference type="NCBIfam" id="NF009855">
    <property type="entry name" value="PRK13321.1"/>
    <property type="match status" value="1"/>
</dbReference>
<dbReference type="PANTHER" id="PTHR34265">
    <property type="entry name" value="TYPE III PANTOTHENATE KINASE"/>
    <property type="match status" value="1"/>
</dbReference>
<dbReference type="PANTHER" id="PTHR34265:SF1">
    <property type="entry name" value="TYPE III PANTOTHENATE KINASE"/>
    <property type="match status" value="1"/>
</dbReference>
<dbReference type="Pfam" id="PF03309">
    <property type="entry name" value="Pan_kinase"/>
    <property type="match status" value="1"/>
</dbReference>
<dbReference type="SUPFAM" id="SSF53067">
    <property type="entry name" value="Actin-like ATPase domain"/>
    <property type="match status" value="2"/>
</dbReference>
<proteinExistence type="inferred from homology"/>
<reference key="1">
    <citation type="journal article" date="2006" name="Proc. Natl. Acad. Sci. U.S.A.">
        <title>Evolution of sensory complexity recorded in a myxobacterial genome.</title>
        <authorList>
            <person name="Goldman B.S."/>
            <person name="Nierman W.C."/>
            <person name="Kaiser D."/>
            <person name="Slater S.C."/>
            <person name="Durkin A.S."/>
            <person name="Eisen J.A."/>
            <person name="Ronning C.M."/>
            <person name="Barbazuk W.B."/>
            <person name="Blanchard M."/>
            <person name="Field C."/>
            <person name="Halling C."/>
            <person name="Hinkle G."/>
            <person name="Iartchuk O."/>
            <person name="Kim H.S."/>
            <person name="Mackenzie C."/>
            <person name="Madupu R."/>
            <person name="Miller N."/>
            <person name="Shvartsbeyn A."/>
            <person name="Sullivan S.A."/>
            <person name="Vaudin M."/>
            <person name="Wiegand R."/>
            <person name="Kaplan H.B."/>
        </authorList>
    </citation>
    <scope>NUCLEOTIDE SEQUENCE [LARGE SCALE GENOMIC DNA]</scope>
    <source>
        <strain>DK1622</strain>
    </source>
</reference>